<reference key="1">
    <citation type="journal article" date="2003" name="Mol. Microbiol.">
        <title>An integrated analysis of the genome of the hyperthermophilic archaeon Pyrococcus abyssi.</title>
        <authorList>
            <person name="Cohen G.N."/>
            <person name="Barbe V."/>
            <person name="Flament D."/>
            <person name="Galperin M."/>
            <person name="Heilig R."/>
            <person name="Lecompte O."/>
            <person name="Poch O."/>
            <person name="Prieur D."/>
            <person name="Querellou J."/>
            <person name="Ripp R."/>
            <person name="Thierry J.-C."/>
            <person name="Van der Oost J."/>
            <person name="Weissenbach J."/>
            <person name="Zivanovic Y."/>
            <person name="Forterre P."/>
        </authorList>
    </citation>
    <scope>NUCLEOTIDE SEQUENCE [LARGE SCALE GENOMIC DNA]</scope>
    <source>
        <strain>GE5 / Orsay</strain>
    </source>
</reference>
<reference key="2">
    <citation type="journal article" date="2012" name="Curr. Microbiol.">
        <title>Re-annotation of two hyperthermophilic archaea Pyrococcus abyssi GE5 and Pyrococcus furiosus DSM 3638.</title>
        <authorList>
            <person name="Gao J."/>
            <person name="Wang J."/>
        </authorList>
    </citation>
    <scope>GENOME REANNOTATION</scope>
    <source>
        <strain>GE5 / Orsay</strain>
    </source>
</reference>
<gene>
    <name evidence="1" type="primary">cobB</name>
    <name type="ordered locus">PYRAB12010</name>
    <name type="ORF">PAB0801</name>
</gene>
<protein>
    <recommendedName>
        <fullName evidence="1">NAD-dependent protein deacylase</fullName>
        <ecNumber evidence="1 2">2.3.1.286</ecNumber>
    </recommendedName>
    <alternativeName>
        <fullName evidence="1">Regulatory protein SIR2 homolog</fullName>
    </alternativeName>
</protein>
<proteinExistence type="inferred from homology"/>
<keyword id="KW-0963">Cytoplasm</keyword>
<keyword id="KW-0479">Metal-binding</keyword>
<keyword id="KW-0520">NAD</keyword>
<keyword id="KW-0804">Transcription</keyword>
<keyword id="KW-0805">Transcription regulation</keyword>
<keyword id="KW-0808">Transferase</keyword>
<keyword id="KW-0862">Zinc</keyword>
<organism>
    <name type="scientific">Pyrococcus abyssi (strain GE5 / Orsay)</name>
    <dbReference type="NCBI Taxonomy" id="272844"/>
    <lineage>
        <taxon>Archaea</taxon>
        <taxon>Methanobacteriati</taxon>
        <taxon>Methanobacteriota</taxon>
        <taxon>Thermococci</taxon>
        <taxon>Thermococcales</taxon>
        <taxon>Thermococcaceae</taxon>
        <taxon>Pyrococcus</taxon>
    </lineage>
</organism>
<comment type="function">
    <text evidence="1">NAD-dependent lysine deacetylase and desuccinylase that specifically removes acetyl and succinyl groups on target proteins. Modulates the activities of several proteins which are inactive in their acylated form. Deacetylates the N-terminal lysine residue of Alba, the major archaeal chromatin protein and that, in turn, increases Alba's DNA binding affinity, thereby repressing transcription.</text>
</comment>
<comment type="catalytic activity">
    <reaction evidence="1">
        <text>N(6)-acetyl-L-lysyl-[protein] + NAD(+) + H2O = 2''-O-acetyl-ADP-D-ribose + nicotinamide + L-lysyl-[protein]</text>
        <dbReference type="Rhea" id="RHEA:43636"/>
        <dbReference type="Rhea" id="RHEA-COMP:9752"/>
        <dbReference type="Rhea" id="RHEA-COMP:10731"/>
        <dbReference type="ChEBI" id="CHEBI:15377"/>
        <dbReference type="ChEBI" id="CHEBI:17154"/>
        <dbReference type="ChEBI" id="CHEBI:29969"/>
        <dbReference type="ChEBI" id="CHEBI:57540"/>
        <dbReference type="ChEBI" id="CHEBI:61930"/>
        <dbReference type="ChEBI" id="CHEBI:83767"/>
        <dbReference type="EC" id="2.3.1.286"/>
    </reaction>
</comment>
<comment type="catalytic activity">
    <reaction evidence="1">
        <text>N(6)-succinyl-L-lysyl-[protein] + NAD(+) + H2O = 2''-O-succinyl-ADP-D-ribose + nicotinamide + L-lysyl-[protein]</text>
        <dbReference type="Rhea" id="RHEA:47668"/>
        <dbReference type="Rhea" id="RHEA-COMP:9752"/>
        <dbReference type="Rhea" id="RHEA-COMP:11877"/>
        <dbReference type="ChEBI" id="CHEBI:15377"/>
        <dbReference type="ChEBI" id="CHEBI:17154"/>
        <dbReference type="ChEBI" id="CHEBI:29969"/>
        <dbReference type="ChEBI" id="CHEBI:57540"/>
        <dbReference type="ChEBI" id="CHEBI:87830"/>
        <dbReference type="ChEBI" id="CHEBI:87832"/>
    </reaction>
</comment>
<comment type="cofactor">
    <cofactor evidence="1">
        <name>Zn(2+)</name>
        <dbReference type="ChEBI" id="CHEBI:29105"/>
    </cofactor>
    <text evidence="1">Binds 1 zinc ion per subunit.</text>
</comment>
<comment type="subcellular location">
    <subcellularLocation>
        <location evidence="1">Cytoplasm</location>
    </subcellularLocation>
</comment>
<comment type="domain">
    <text evidence="1">2 residues (Tyr-64 and Arg-67) present in a large hydrophobic pocket are probably involved in substrate specificity. They are important for desuccinylation activity, but dispensable for deacetylation activity.</text>
</comment>
<comment type="similarity">
    <text evidence="1">Belongs to the sirtuin family. Class III subfamily.</text>
</comment>
<evidence type="ECO:0000255" key="1">
    <source>
        <dbReference type="HAMAP-Rule" id="MF_01121"/>
    </source>
</evidence>
<evidence type="ECO:0000255" key="2">
    <source>
        <dbReference type="PROSITE-ProRule" id="PRU00236"/>
    </source>
</evidence>
<accession>Q9UZE7</accession>
<accession>G8ZKJ3</accession>
<feature type="chain" id="PRO_0000110381" description="NAD-dependent protein deacylase">
    <location>
        <begin position="1"/>
        <end position="250"/>
    </location>
</feature>
<feature type="domain" description="Deacetylase sirtuin-type" evidence="2">
    <location>
        <begin position="1"/>
        <end position="250"/>
    </location>
</feature>
<feature type="active site" description="Proton acceptor" evidence="2">
    <location>
        <position position="116"/>
    </location>
</feature>
<feature type="binding site" evidence="1">
    <location>
        <begin position="20"/>
        <end position="39"/>
    </location>
    <ligand>
        <name>NAD(+)</name>
        <dbReference type="ChEBI" id="CHEBI:57540"/>
    </ligand>
</feature>
<feature type="binding site" evidence="1">
    <location>
        <position position="64"/>
    </location>
    <ligand>
        <name>substrate</name>
    </ligand>
</feature>
<feature type="binding site" evidence="1">
    <location>
        <position position="67"/>
    </location>
    <ligand>
        <name>substrate</name>
    </ligand>
</feature>
<feature type="binding site" evidence="1">
    <location>
        <begin position="98"/>
        <end position="101"/>
    </location>
    <ligand>
        <name>NAD(+)</name>
        <dbReference type="ChEBI" id="CHEBI:57540"/>
    </ligand>
</feature>
<feature type="binding site" evidence="1">
    <location>
        <position position="124"/>
    </location>
    <ligand>
        <name>Zn(2+)</name>
        <dbReference type="ChEBI" id="CHEBI:29105"/>
    </ligand>
</feature>
<feature type="binding site" evidence="1">
    <location>
        <position position="127"/>
    </location>
    <ligand>
        <name>Zn(2+)</name>
        <dbReference type="ChEBI" id="CHEBI:29105"/>
    </ligand>
</feature>
<feature type="binding site" evidence="1">
    <location>
        <position position="150"/>
    </location>
    <ligand>
        <name>Zn(2+)</name>
        <dbReference type="ChEBI" id="CHEBI:29105"/>
    </ligand>
</feature>
<feature type="binding site" evidence="1">
    <location>
        <position position="153"/>
    </location>
    <ligand>
        <name>Zn(2+)</name>
        <dbReference type="ChEBI" id="CHEBI:29105"/>
    </ligand>
</feature>
<feature type="binding site" evidence="1">
    <location>
        <begin position="190"/>
        <end position="192"/>
    </location>
    <ligand>
        <name>NAD(+)</name>
        <dbReference type="ChEBI" id="CHEBI:57540"/>
    </ligand>
</feature>
<feature type="binding site" evidence="1">
    <location>
        <begin position="216"/>
        <end position="218"/>
    </location>
    <ligand>
        <name>NAD(+)</name>
        <dbReference type="ChEBI" id="CHEBI:57540"/>
    </ligand>
</feature>
<feature type="binding site" evidence="1">
    <location>
        <position position="234"/>
    </location>
    <ligand>
        <name>NAD(+)</name>
        <dbReference type="ChEBI" id="CHEBI:57540"/>
    </ligand>
</feature>
<sequence length="250" mass="28140">MIVEVARVLASSKNAIAFTGAGISAESGVPTFRGKDGLWNKYRPEELATPEAFARNPKLVWEFYKWRINKILKAKPNPAHYALVELEDMGILRAVITQNVDDLHREAGTRNLIELHGNIFRVKCTKCNFKEYLKESQRLEEVLKEDLPKCPRCGSLLRPDVVWFGEPLPREELDRAFKLAEKADAVLVVGTSGLVYPAAYIPYIVKESGGTVIEVNVEESAITPIADFFLRGRAGEVLPRVVHEVRRLLQ</sequence>
<dbReference type="EC" id="2.3.1.286" evidence="1 2"/>
<dbReference type="EMBL" id="AJ248286">
    <property type="protein sequence ID" value="CAB50112.1"/>
    <property type="molecule type" value="Genomic_DNA"/>
</dbReference>
<dbReference type="EMBL" id="HE613800">
    <property type="protein sequence ID" value="CCE70636.1"/>
    <property type="molecule type" value="Genomic_DNA"/>
</dbReference>
<dbReference type="PIR" id="C75101">
    <property type="entry name" value="C75101"/>
</dbReference>
<dbReference type="RefSeq" id="WP_010868319.1">
    <property type="nucleotide sequence ID" value="NC_000868.1"/>
</dbReference>
<dbReference type="SMR" id="Q9UZE7"/>
<dbReference type="STRING" id="272844.PAB0801"/>
<dbReference type="KEGG" id="pab:PAB0801"/>
<dbReference type="PATRIC" id="fig|272844.11.peg.1280"/>
<dbReference type="eggNOG" id="arCOG04248">
    <property type="taxonomic scope" value="Archaea"/>
</dbReference>
<dbReference type="HOGENOM" id="CLU_023643_3_1_2"/>
<dbReference type="OrthoDB" id="728at2157"/>
<dbReference type="PhylomeDB" id="Q9UZE7"/>
<dbReference type="Proteomes" id="UP000000810">
    <property type="component" value="Chromosome"/>
</dbReference>
<dbReference type="Proteomes" id="UP000009139">
    <property type="component" value="Chromosome"/>
</dbReference>
<dbReference type="GO" id="GO:0005737">
    <property type="term" value="C:cytoplasm"/>
    <property type="evidence" value="ECO:0007669"/>
    <property type="project" value="UniProtKB-SubCell"/>
</dbReference>
<dbReference type="GO" id="GO:0017136">
    <property type="term" value="F:histone deacetylase activity, NAD-dependent"/>
    <property type="evidence" value="ECO:0007669"/>
    <property type="project" value="TreeGrafter"/>
</dbReference>
<dbReference type="GO" id="GO:0070403">
    <property type="term" value="F:NAD+ binding"/>
    <property type="evidence" value="ECO:0007669"/>
    <property type="project" value="UniProtKB-UniRule"/>
</dbReference>
<dbReference type="GO" id="GO:0036054">
    <property type="term" value="F:protein-malonyllysine demalonylase activity"/>
    <property type="evidence" value="ECO:0007669"/>
    <property type="project" value="InterPro"/>
</dbReference>
<dbReference type="GO" id="GO:0036055">
    <property type="term" value="F:protein-succinyllysine desuccinylase activity"/>
    <property type="evidence" value="ECO:0007669"/>
    <property type="project" value="UniProtKB-UniRule"/>
</dbReference>
<dbReference type="GO" id="GO:0008270">
    <property type="term" value="F:zinc ion binding"/>
    <property type="evidence" value="ECO:0007669"/>
    <property type="project" value="UniProtKB-UniRule"/>
</dbReference>
<dbReference type="CDD" id="cd01412">
    <property type="entry name" value="SIRT5_Af1_CobB"/>
    <property type="match status" value="1"/>
</dbReference>
<dbReference type="Gene3D" id="3.30.1600.10">
    <property type="entry name" value="SIR2/SIRT2 'Small Domain"/>
    <property type="match status" value="1"/>
</dbReference>
<dbReference type="Gene3D" id="3.40.50.1220">
    <property type="entry name" value="TPP-binding domain"/>
    <property type="match status" value="1"/>
</dbReference>
<dbReference type="HAMAP" id="MF_01121">
    <property type="entry name" value="Sirtuin_ClassIII"/>
    <property type="match status" value="1"/>
</dbReference>
<dbReference type="InterPro" id="IPR029035">
    <property type="entry name" value="DHS-like_NAD/FAD-binding_dom"/>
</dbReference>
<dbReference type="InterPro" id="IPR050134">
    <property type="entry name" value="NAD-dep_sirtuin_deacylases"/>
</dbReference>
<dbReference type="InterPro" id="IPR003000">
    <property type="entry name" value="Sirtuin"/>
</dbReference>
<dbReference type="InterPro" id="IPR026591">
    <property type="entry name" value="Sirtuin_cat_small_dom_sf"/>
</dbReference>
<dbReference type="InterPro" id="IPR027546">
    <property type="entry name" value="Sirtuin_class_III"/>
</dbReference>
<dbReference type="InterPro" id="IPR026590">
    <property type="entry name" value="Ssirtuin_cat_dom"/>
</dbReference>
<dbReference type="NCBIfam" id="NF001753">
    <property type="entry name" value="PRK00481.1-3"/>
    <property type="match status" value="1"/>
</dbReference>
<dbReference type="NCBIfam" id="NF040867">
    <property type="entry name" value="prot_deacyl_CobB"/>
    <property type="match status" value="1"/>
</dbReference>
<dbReference type="PANTHER" id="PTHR11085">
    <property type="entry name" value="NAD-DEPENDENT PROTEIN DEACYLASE SIRTUIN-5, MITOCHONDRIAL-RELATED"/>
    <property type="match status" value="1"/>
</dbReference>
<dbReference type="PANTHER" id="PTHR11085:SF10">
    <property type="entry name" value="NAD-DEPENDENT PROTEIN DEACYLASE SIRTUIN-5, MITOCHONDRIAL-RELATED"/>
    <property type="match status" value="1"/>
</dbReference>
<dbReference type="Pfam" id="PF02146">
    <property type="entry name" value="SIR2"/>
    <property type="match status" value="1"/>
</dbReference>
<dbReference type="SUPFAM" id="SSF52467">
    <property type="entry name" value="DHS-like NAD/FAD-binding domain"/>
    <property type="match status" value="1"/>
</dbReference>
<dbReference type="PROSITE" id="PS50305">
    <property type="entry name" value="SIRTUIN"/>
    <property type="match status" value="1"/>
</dbReference>
<name>NPD_PYRAB</name>